<evidence type="ECO:0000250" key="1"/>
<evidence type="ECO:0000255" key="2"/>
<evidence type="ECO:0000255" key="3">
    <source>
        <dbReference type="PROSITE-ProRule" id="PRU00409"/>
    </source>
</evidence>
<evidence type="ECO:0000255" key="4">
    <source>
        <dbReference type="PROSITE-ProRule" id="PRU01066"/>
    </source>
</evidence>
<organism>
    <name type="scientific">Dictyostelium discoideum</name>
    <name type="common">Social amoeba</name>
    <dbReference type="NCBI Taxonomy" id="44689"/>
    <lineage>
        <taxon>Eukaryota</taxon>
        <taxon>Amoebozoa</taxon>
        <taxon>Evosea</taxon>
        <taxon>Eumycetozoa</taxon>
        <taxon>Dictyostelia</taxon>
        <taxon>Dictyosteliales</taxon>
        <taxon>Dictyosteliaceae</taxon>
        <taxon>Dictyostelium</taxon>
    </lineage>
</organism>
<dbReference type="EC" id="6.4.1.4"/>
<dbReference type="EMBL" id="AAFI02000100">
    <property type="protein sequence ID" value="EAL63756.1"/>
    <property type="molecule type" value="Genomic_DNA"/>
</dbReference>
<dbReference type="RefSeq" id="XP_637277.1">
    <property type="nucleotide sequence ID" value="XM_632185.1"/>
</dbReference>
<dbReference type="SMR" id="Q54KE6"/>
<dbReference type="FunCoup" id="Q54KE6">
    <property type="interactions" value="724"/>
</dbReference>
<dbReference type="STRING" id="44689.Q54KE6"/>
<dbReference type="GlyGen" id="Q54KE6">
    <property type="glycosylation" value="1 site"/>
</dbReference>
<dbReference type="PaxDb" id="44689-DDB0230065"/>
<dbReference type="EnsemblProtists" id="EAL63756">
    <property type="protein sequence ID" value="EAL63756"/>
    <property type="gene ID" value="DDB_G0287377"/>
</dbReference>
<dbReference type="GeneID" id="8626108"/>
<dbReference type="KEGG" id="ddi:DDB_G0287377"/>
<dbReference type="dictyBase" id="DDB_G0287377">
    <property type="gene designation" value="mccA"/>
</dbReference>
<dbReference type="VEuPathDB" id="AmoebaDB:DDB_G0287377"/>
<dbReference type="eggNOG" id="KOG0238">
    <property type="taxonomic scope" value="Eukaryota"/>
</dbReference>
<dbReference type="HOGENOM" id="CLU_000395_3_1_1"/>
<dbReference type="InParanoid" id="Q54KE6"/>
<dbReference type="OMA" id="FINKPKH"/>
<dbReference type="PhylomeDB" id="Q54KE6"/>
<dbReference type="Reactome" id="R-DDI-196780">
    <property type="pathway name" value="Biotin transport and metabolism"/>
</dbReference>
<dbReference type="Reactome" id="R-DDI-70895">
    <property type="pathway name" value="Branched-chain amino acid catabolism"/>
</dbReference>
<dbReference type="UniPathway" id="UPA00363">
    <property type="reaction ID" value="UER00861"/>
</dbReference>
<dbReference type="PRO" id="PR:Q54KE6"/>
<dbReference type="Proteomes" id="UP000002195">
    <property type="component" value="Chromosome 5"/>
</dbReference>
<dbReference type="GO" id="GO:0005759">
    <property type="term" value="C:mitochondrial matrix"/>
    <property type="evidence" value="ECO:0007669"/>
    <property type="project" value="UniProtKB-SubCell"/>
</dbReference>
<dbReference type="GO" id="GO:0005739">
    <property type="term" value="C:mitochondrion"/>
    <property type="evidence" value="ECO:0000250"/>
    <property type="project" value="dictyBase"/>
</dbReference>
<dbReference type="GO" id="GO:0005524">
    <property type="term" value="F:ATP binding"/>
    <property type="evidence" value="ECO:0007669"/>
    <property type="project" value="UniProtKB-KW"/>
</dbReference>
<dbReference type="GO" id="GO:0046872">
    <property type="term" value="F:metal ion binding"/>
    <property type="evidence" value="ECO:0007669"/>
    <property type="project" value="InterPro"/>
</dbReference>
<dbReference type="GO" id="GO:0004485">
    <property type="term" value="F:methylcrotonoyl-CoA carboxylase activity"/>
    <property type="evidence" value="ECO:0000250"/>
    <property type="project" value="dictyBase"/>
</dbReference>
<dbReference type="GO" id="GO:0006552">
    <property type="term" value="P:L-leucine catabolic process"/>
    <property type="evidence" value="ECO:0007669"/>
    <property type="project" value="UniProtKB-UniPathway"/>
</dbReference>
<dbReference type="CDD" id="cd06850">
    <property type="entry name" value="biotinyl_domain"/>
    <property type="match status" value="1"/>
</dbReference>
<dbReference type="FunFam" id="2.40.50.100:FF:000003">
    <property type="entry name" value="Acetyl-CoA carboxylase biotin carboxyl carrier protein"/>
    <property type="match status" value="1"/>
</dbReference>
<dbReference type="FunFam" id="3.30.1490.20:FF:000003">
    <property type="entry name" value="acetyl-CoA carboxylase isoform X1"/>
    <property type="match status" value="1"/>
</dbReference>
<dbReference type="FunFam" id="3.30.470.20:FF:000028">
    <property type="entry name" value="Methylcrotonoyl-CoA carboxylase subunit alpha, mitochondrial"/>
    <property type="match status" value="1"/>
</dbReference>
<dbReference type="FunFam" id="3.40.50.20:FF:000010">
    <property type="entry name" value="Propionyl-CoA carboxylase subunit alpha"/>
    <property type="match status" value="1"/>
</dbReference>
<dbReference type="Gene3D" id="2.40.50.100">
    <property type="match status" value="1"/>
</dbReference>
<dbReference type="Gene3D" id="3.30.700.40">
    <property type="match status" value="1"/>
</dbReference>
<dbReference type="Gene3D" id="3.40.50.20">
    <property type="match status" value="1"/>
</dbReference>
<dbReference type="Gene3D" id="3.30.1490.20">
    <property type="entry name" value="ATP-grasp fold, A domain"/>
    <property type="match status" value="1"/>
</dbReference>
<dbReference type="Gene3D" id="3.30.470.20">
    <property type="entry name" value="ATP-grasp fold, B domain"/>
    <property type="match status" value="1"/>
</dbReference>
<dbReference type="InterPro" id="IPR011761">
    <property type="entry name" value="ATP-grasp"/>
</dbReference>
<dbReference type="InterPro" id="IPR013815">
    <property type="entry name" value="ATP_grasp_subdomain_1"/>
</dbReference>
<dbReference type="InterPro" id="IPR005481">
    <property type="entry name" value="BC-like_N"/>
</dbReference>
<dbReference type="InterPro" id="IPR001882">
    <property type="entry name" value="Biotin_BS"/>
</dbReference>
<dbReference type="InterPro" id="IPR050856">
    <property type="entry name" value="Biotin_carboxylase_complex"/>
</dbReference>
<dbReference type="InterPro" id="IPR011764">
    <property type="entry name" value="Biotin_carboxylation_dom"/>
</dbReference>
<dbReference type="InterPro" id="IPR005482">
    <property type="entry name" value="Biotin_COase_C"/>
</dbReference>
<dbReference type="InterPro" id="IPR000089">
    <property type="entry name" value="Biotin_lipoyl"/>
</dbReference>
<dbReference type="InterPro" id="IPR005479">
    <property type="entry name" value="CbamoylP_synth_lsu-like_ATP-bd"/>
</dbReference>
<dbReference type="InterPro" id="IPR016185">
    <property type="entry name" value="PreATP-grasp_dom_sf"/>
</dbReference>
<dbReference type="InterPro" id="IPR011054">
    <property type="entry name" value="Rudment_hybrid_motif"/>
</dbReference>
<dbReference type="InterPro" id="IPR011053">
    <property type="entry name" value="Single_hybrid_motif"/>
</dbReference>
<dbReference type="NCBIfam" id="NF006367">
    <property type="entry name" value="PRK08591.1"/>
    <property type="match status" value="1"/>
</dbReference>
<dbReference type="PANTHER" id="PTHR18866">
    <property type="entry name" value="CARBOXYLASE:PYRUVATE/ACETYL-COA/PROPIONYL-COA CARBOXYLASE"/>
    <property type="match status" value="1"/>
</dbReference>
<dbReference type="PANTHER" id="PTHR18866:SF33">
    <property type="entry name" value="METHYLCROTONOYL-COA CARBOXYLASE SUBUNIT ALPHA, MITOCHONDRIAL-RELATED"/>
    <property type="match status" value="1"/>
</dbReference>
<dbReference type="Pfam" id="PF02785">
    <property type="entry name" value="Biotin_carb_C"/>
    <property type="match status" value="1"/>
</dbReference>
<dbReference type="Pfam" id="PF00289">
    <property type="entry name" value="Biotin_carb_N"/>
    <property type="match status" value="1"/>
</dbReference>
<dbReference type="Pfam" id="PF00364">
    <property type="entry name" value="Biotin_lipoyl"/>
    <property type="match status" value="1"/>
</dbReference>
<dbReference type="Pfam" id="PF02786">
    <property type="entry name" value="CPSase_L_D2"/>
    <property type="match status" value="1"/>
</dbReference>
<dbReference type="SMART" id="SM00878">
    <property type="entry name" value="Biotin_carb_C"/>
    <property type="match status" value="1"/>
</dbReference>
<dbReference type="SUPFAM" id="SSF56059">
    <property type="entry name" value="Glutathione synthetase ATP-binding domain-like"/>
    <property type="match status" value="1"/>
</dbReference>
<dbReference type="SUPFAM" id="SSF52440">
    <property type="entry name" value="PreATP-grasp domain"/>
    <property type="match status" value="1"/>
</dbReference>
<dbReference type="SUPFAM" id="SSF51246">
    <property type="entry name" value="Rudiment single hybrid motif"/>
    <property type="match status" value="1"/>
</dbReference>
<dbReference type="SUPFAM" id="SSF51230">
    <property type="entry name" value="Single hybrid motif"/>
    <property type="match status" value="1"/>
</dbReference>
<dbReference type="PROSITE" id="PS50975">
    <property type="entry name" value="ATP_GRASP"/>
    <property type="match status" value="1"/>
</dbReference>
<dbReference type="PROSITE" id="PS50979">
    <property type="entry name" value="BC"/>
    <property type="match status" value="1"/>
</dbReference>
<dbReference type="PROSITE" id="PS00188">
    <property type="entry name" value="BIOTIN"/>
    <property type="match status" value="1"/>
</dbReference>
<dbReference type="PROSITE" id="PS50968">
    <property type="entry name" value="BIOTINYL_LIPOYL"/>
    <property type="match status" value="1"/>
</dbReference>
<dbReference type="PROSITE" id="PS00867">
    <property type="entry name" value="CPSASE_2"/>
    <property type="match status" value="1"/>
</dbReference>
<accession>Q54KE6</accession>
<feature type="transit peptide" description="Mitochondrion" evidence="2">
    <location>
        <begin position="1"/>
        <end status="unknown"/>
    </location>
</feature>
<feature type="chain" id="PRO_0000327665" description="Methylcrotonoyl-CoA carboxylase subunit alpha, mitochondrial">
    <location>
        <begin status="unknown"/>
        <end position="699"/>
    </location>
</feature>
<feature type="domain" description="Biotin carboxylation">
    <location>
        <begin position="30"/>
        <end position="475"/>
    </location>
</feature>
<feature type="domain" description="ATP-grasp" evidence="3">
    <location>
        <begin position="148"/>
        <end position="345"/>
    </location>
</feature>
<feature type="domain" description="Biotinyl-binding" evidence="4">
    <location>
        <begin position="624"/>
        <end position="699"/>
    </location>
</feature>
<feature type="active site" evidence="1">
    <location>
        <position position="320"/>
    </location>
</feature>
<feature type="binding site" evidence="1">
    <location>
        <position position="144"/>
    </location>
    <ligand>
        <name>ATP</name>
        <dbReference type="ChEBI" id="CHEBI:30616"/>
    </ligand>
</feature>
<feature type="binding site" evidence="1">
    <location>
        <position position="228"/>
    </location>
    <ligand>
        <name>ATP</name>
        <dbReference type="ChEBI" id="CHEBI:30616"/>
    </ligand>
</feature>
<feature type="binding site" evidence="1">
    <location>
        <position position="263"/>
    </location>
    <ligand>
        <name>ATP</name>
        <dbReference type="ChEBI" id="CHEBI:30616"/>
    </ligand>
</feature>
<feature type="modified residue" description="N6-biotinyllysine" evidence="1 4">
    <location>
        <position position="665"/>
    </location>
</feature>
<sequence>MFSLGKLVKKDAFFYRYITNVNKDLKIKPITKILIANRGEIACRVMRTAKSKGVKTVAVYSEADKNSLHVSMADESYLIGPAAAKESYLCGNKIIDVAKRSGAQAIHPGYGFLSENSDFADLCEREGIIFIGPPSDAIKAMGSKSASKDIMIKAGVPTIPGYHGEDQSMSVLKSEAAKIGYPVLIKAVMGGGGKGMRIVEREEDLEDGVESSKREATASFGDSRVLVEKYLVHPRHVEIQVFADRHGNCVHLFERDCSVQRRHQKIIEEAPAPHLSEELRKKMGDAAVAAAKAVGYVGAGTVEFILSADNSFFFMEMNTRLQVEHPITEMITKQDLVEWQLKVAESQTLPMEQEQLKIHGHSFEARIYAENPDSDFLPGTGKLAHLSTPTPSDTLRVETGVRQGDEVSVYYDPMIAKLVVWDQDREKALRYLRNALDEYHIIGLNTNISFLKRLSTHPSFMAGEVETGFIPIHRESLMAPQAPMSDDSLALAATSLLLKEITQQKSKEDPNSPWSSLGGFRINHNLKKQVKFNQKDNKVVVNVEFIGGGGAAANGKHNFKVTLDNGNVVEVLDAKLNQNNETISAHVNGRFYNNIKSVIVKDTLTIFNEGQQYQLDIPQDVKPKGADGVLGSLVSPMPGKITKVMVNVGDMVKKGQPILLMEAMKMEHTIRSPIDGKVESLPYNVNEIVEDKKTLAVIV</sequence>
<reference key="1">
    <citation type="journal article" date="2005" name="Nature">
        <title>The genome of the social amoeba Dictyostelium discoideum.</title>
        <authorList>
            <person name="Eichinger L."/>
            <person name="Pachebat J.A."/>
            <person name="Gloeckner G."/>
            <person name="Rajandream M.A."/>
            <person name="Sucgang R."/>
            <person name="Berriman M."/>
            <person name="Song J."/>
            <person name="Olsen R."/>
            <person name="Szafranski K."/>
            <person name="Xu Q."/>
            <person name="Tunggal B."/>
            <person name="Kummerfeld S."/>
            <person name="Madera M."/>
            <person name="Konfortov B.A."/>
            <person name="Rivero F."/>
            <person name="Bankier A.T."/>
            <person name="Lehmann R."/>
            <person name="Hamlin N."/>
            <person name="Davies R."/>
            <person name="Gaudet P."/>
            <person name="Fey P."/>
            <person name="Pilcher K."/>
            <person name="Chen G."/>
            <person name="Saunders D."/>
            <person name="Sodergren E.J."/>
            <person name="Davis P."/>
            <person name="Kerhornou A."/>
            <person name="Nie X."/>
            <person name="Hall N."/>
            <person name="Anjard C."/>
            <person name="Hemphill L."/>
            <person name="Bason N."/>
            <person name="Farbrother P."/>
            <person name="Desany B."/>
            <person name="Just E."/>
            <person name="Morio T."/>
            <person name="Rost R."/>
            <person name="Churcher C.M."/>
            <person name="Cooper J."/>
            <person name="Haydock S."/>
            <person name="van Driessche N."/>
            <person name="Cronin A."/>
            <person name="Goodhead I."/>
            <person name="Muzny D.M."/>
            <person name="Mourier T."/>
            <person name="Pain A."/>
            <person name="Lu M."/>
            <person name="Harper D."/>
            <person name="Lindsay R."/>
            <person name="Hauser H."/>
            <person name="James K.D."/>
            <person name="Quiles M."/>
            <person name="Madan Babu M."/>
            <person name="Saito T."/>
            <person name="Buchrieser C."/>
            <person name="Wardroper A."/>
            <person name="Felder M."/>
            <person name="Thangavelu M."/>
            <person name="Johnson D."/>
            <person name="Knights A."/>
            <person name="Loulseged H."/>
            <person name="Mungall K.L."/>
            <person name="Oliver K."/>
            <person name="Price C."/>
            <person name="Quail M.A."/>
            <person name="Urushihara H."/>
            <person name="Hernandez J."/>
            <person name="Rabbinowitsch E."/>
            <person name="Steffen D."/>
            <person name="Sanders M."/>
            <person name="Ma J."/>
            <person name="Kohara Y."/>
            <person name="Sharp S."/>
            <person name="Simmonds M.N."/>
            <person name="Spiegler S."/>
            <person name="Tivey A."/>
            <person name="Sugano S."/>
            <person name="White B."/>
            <person name="Walker D."/>
            <person name="Woodward J.R."/>
            <person name="Winckler T."/>
            <person name="Tanaka Y."/>
            <person name="Shaulsky G."/>
            <person name="Schleicher M."/>
            <person name="Weinstock G.M."/>
            <person name="Rosenthal A."/>
            <person name="Cox E.C."/>
            <person name="Chisholm R.L."/>
            <person name="Gibbs R.A."/>
            <person name="Loomis W.F."/>
            <person name="Platzer M."/>
            <person name="Kay R.R."/>
            <person name="Williams J.G."/>
            <person name="Dear P.H."/>
            <person name="Noegel A.A."/>
            <person name="Barrell B.G."/>
            <person name="Kuspa A."/>
        </authorList>
    </citation>
    <scope>NUCLEOTIDE SEQUENCE [LARGE SCALE GENOMIC DNA]</scope>
    <source>
        <strain>AX4</strain>
    </source>
</reference>
<protein>
    <recommendedName>
        <fullName>Methylcrotonoyl-CoA carboxylase subunit alpha, mitochondrial</fullName>
        <shortName>MCCase subunit alpha</shortName>
        <ecNumber>6.4.1.4</ecNumber>
    </recommendedName>
    <alternativeName>
        <fullName>3-methylcrotonyl-CoA carboxylase 1</fullName>
    </alternativeName>
    <alternativeName>
        <fullName>3-methylcrotonyl-CoA carboxylase biotin-containing subunit</fullName>
    </alternativeName>
    <alternativeName>
        <fullName>3-methylcrotonyl-CoA:carbon dioxide ligase subunit alpha</fullName>
    </alternativeName>
</protein>
<keyword id="KW-0067">ATP-binding</keyword>
<keyword id="KW-0092">Biotin</keyword>
<keyword id="KW-0436">Ligase</keyword>
<keyword id="KW-0496">Mitochondrion</keyword>
<keyword id="KW-0547">Nucleotide-binding</keyword>
<keyword id="KW-1185">Reference proteome</keyword>
<keyword id="KW-0809">Transit peptide</keyword>
<proteinExistence type="inferred from homology"/>
<name>MCCA_DICDI</name>
<comment type="function">
    <text evidence="1">Biotin-attachment subunit of the 3-methylcrotonyl-CoA carboxylase, an enzyme that catalyzes the conversion of 3-methylcrotonyl-CoA to 3-methylglutaconyl-CoA, a critical step for leucine and isovaleric acid catabolism.</text>
</comment>
<comment type="catalytic activity">
    <reaction>
        <text>3-methylbut-2-enoyl-CoA + hydrogencarbonate + ATP = 3-methyl-(2E)-glutaconyl-CoA + ADP + phosphate + H(+)</text>
        <dbReference type="Rhea" id="RHEA:13589"/>
        <dbReference type="ChEBI" id="CHEBI:15378"/>
        <dbReference type="ChEBI" id="CHEBI:17544"/>
        <dbReference type="ChEBI" id="CHEBI:30616"/>
        <dbReference type="ChEBI" id="CHEBI:43474"/>
        <dbReference type="ChEBI" id="CHEBI:57344"/>
        <dbReference type="ChEBI" id="CHEBI:57346"/>
        <dbReference type="ChEBI" id="CHEBI:456216"/>
        <dbReference type="EC" id="6.4.1.4"/>
    </reaction>
</comment>
<comment type="cofactor">
    <cofactor evidence="1">
        <name>Mn(2+)</name>
        <dbReference type="ChEBI" id="CHEBI:29035"/>
    </cofactor>
    <text evidence="1">Binds 2 manganese ions per subunit.</text>
</comment>
<comment type="cofactor">
    <cofactor evidence="1">
        <name>biotin</name>
        <dbReference type="ChEBI" id="CHEBI:57586"/>
    </cofactor>
</comment>
<comment type="pathway">
    <text>Amino-acid degradation; L-leucine degradation; (S)-3-hydroxy-3-methylglutaryl-CoA from 3-isovaleryl-CoA: step 2/3.</text>
</comment>
<comment type="subunit">
    <text evidence="1">Probably a dodecamer composed of six biotin-containing alpha subunits and six beta subunits.</text>
</comment>
<comment type="subcellular location">
    <subcellularLocation>
        <location evidence="1">Mitochondrion matrix</location>
    </subcellularLocation>
</comment>
<gene>
    <name type="primary">mccA</name>
    <name type="synonym">mccc1</name>
    <name type="ORF">DDB_G0287377</name>
</gene>